<name>Y3041_SHEB5</name>
<comment type="subcellular location">
    <subcellularLocation>
        <location evidence="1">Periplasm</location>
    </subcellularLocation>
</comment>
<comment type="similarity">
    <text evidence="1">Belongs to the UPF0312 family. Type 1 subfamily.</text>
</comment>
<reference key="1">
    <citation type="submission" date="2007-02" db="EMBL/GenBank/DDBJ databases">
        <title>Complete sequence of chromosome of Shewanella baltica OS155.</title>
        <authorList>
            <consortium name="US DOE Joint Genome Institute"/>
            <person name="Copeland A."/>
            <person name="Lucas S."/>
            <person name="Lapidus A."/>
            <person name="Barry K."/>
            <person name="Detter J.C."/>
            <person name="Glavina del Rio T."/>
            <person name="Hammon N."/>
            <person name="Israni S."/>
            <person name="Dalin E."/>
            <person name="Tice H."/>
            <person name="Pitluck S."/>
            <person name="Sims D.R."/>
            <person name="Brettin T."/>
            <person name="Bruce D."/>
            <person name="Han C."/>
            <person name="Tapia R."/>
            <person name="Brainard J."/>
            <person name="Schmutz J."/>
            <person name="Larimer F."/>
            <person name="Land M."/>
            <person name="Hauser L."/>
            <person name="Kyrpides N."/>
            <person name="Mikhailova N."/>
            <person name="Brettar I."/>
            <person name="Klappenbach J."/>
            <person name="Konstantinidis K."/>
            <person name="Rodrigues J."/>
            <person name="Tiedje J."/>
            <person name="Richardson P."/>
        </authorList>
    </citation>
    <scope>NUCLEOTIDE SEQUENCE [LARGE SCALE GENOMIC DNA]</scope>
    <source>
        <strain>OS155 / ATCC BAA-1091</strain>
    </source>
</reference>
<organism>
    <name type="scientific">Shewanella baltica (strain OS155 / ATCC BAA-1091)</name>
    <dbReference type="NCBI Taxonomy" id="325240"/>
    <lineage>
        <taxon>Bacteria</taxon>
        <taxon>Pseudomonadati</taxon>
        <taxon>Pseudomonadota</taxon>
        <taxon>Gammaproteobacteria</taxon>
        <taxon>Alteromonadales</taxon>
        <taxon>Shewanellaceae</taxon>
        <taxon>Shewanella</taxon>
    </lineage>
</organism>
<feature type="signal peptide" evidence="1">
    <location>
        <begin position="1"/>
        <end position="22"/>
    </location>
</feature>
<feature type="chain" id="PRO_5000224709" description="UPF0312 protein Sbal_3041">
    <location>
        <begin position="23"/>
        <end position="191"/>
    </location>
</feature>
<keyword id="KW-0574">Periplasm</keyword>
<keyword id="KW-1185">Reference proteome</keyword>
<keyword id="KW-0732">Signal</keyword>
<accession>A3D710</accession>
<gene>
    <name type="ordered locus">Sbal_3041</name>
</gene>
<sequence>MKKQLLSALIGASLLAPMAASAADYVIDREGAHASITFKVSHLGYSYVVGRFNDFSGDFSYDAAKPTAAKVNVKVNTLSVDSNHAERDKHIRSADFLNTSKFAQATFTSTTVEDKGNGDLVINGNLTLNGVTKPLAINAHAVGEGQDPWGGYRAGFTGTTTFAMKDFGIKMDLGPASSHVELDLVVEGVRK</sequence>
<protein>
    <recommendedName>
        <fullName evidence="1">UPF0312 protein Sbal_3041</fullName>
    </recommendedName>
</protein>
<dbReference type="EMBL" id="CP000563">
    <property type="protein sequence ID" value="ABN62523.1"/>
    <property type="molecule type" value="Genomic_DNA"/>
</dbReference>
<dbReference type="RefSeq" id="WP_011847378.1">
    <property type="nucleotide sequence ID" value="NC_009052.1"/>
</dbReference>
<dbReference type="SMR" id="A3D710"/>
<dbReference type="STRING" id="325240.Sbal_3041"/>
<dbReference type="KEGG" id="sbl:Sbal_3041"/>
<dbReference type="HOGENOM" id="CLU_071003_1_2_6"/>
<dbReference type="OrthoDB" id="9811006at2"/>
<dbReference type="Proteomes" id="UP000001557">
    <property type="component" value="Chromosome"/>
</dbReference>
<dbReference type="GO" id="GO:0042597">
    <property type="term" value="C:periplasmic space"/>
    <property type="evidence" value="ECO:0007669"/>
    <property type="project" value="UniProtKB-SubCell"/>
</dbReference>
<dbReference type="Gene3D" id="2.40.128.110">
    <property type="entry name" value="Lipid/polyisoprenoid-binding, YceI-like"/>
    <property type="match status" value="1"/>
</dbReference>
<dbReference type="HAMAP" id="MF_00780">
    <property type="entry name" value="UPF0312"/>
    <property type="match status" value="1"/>
</dbReference>
<dbReference type="InterPro" id="IPR007372">
    <property type="entry name" value="Lipid/polyisoprenoid-bd_YceI"/>
</dbReference>
<dbReference type="InterPro" id="IPR036761">
    <property type="entry name" value="TTHA0802/YceI-like_sf"/>
</dbReference>
<dbReference type="InterPro" id="IPR023480">
    <property type="entry name" value="UPF0312/YceI"/>
</dbReference>
<dbReference type="NCBIfam" id="NF002994">
    <property type="entry name" value="PRK03757.1"/>
    <property type="match status" value="1"/>
</dbReference>
<dbReference type="PANTHER" id="PTHR34406">
    <property type="entry name" value="PROTEIN YCEI"/>
    <property type="match status" value="1"/>
</dbReference>
<dbReference type="PANTHER" id="PTHR34406:SF1">
    <property type="entry name" value="PROTEIN YCEI"/>
    <property type="match status" value="1"/>
</dbReference>
<dbReference type="Pfam" id="PF04264">
    <property type="entry name" value="YceI"/>
    <property type="match status" value="1"/>
</dbReference>
<dbReference type="SMART" id="SM00867">
    <property type="entry name" value="YceI"/>
    <property type="match status" value="1"/>
</dbReference>
<dbReference type="SUPFAM" id="SSF101874">
    <property type="entry name" value="YceI-like"/>
    <property type="match status" value="1"/>
</dbReference>
<evidence type="ECO:0000255" key="1">
    <source>
        <dbReference type="HAMAP-Rule" id="MF_00780"/>
    </source>
</evidence>
<proteinExistence type="inferred from homology"/>